<comment type="function">
    <text evidence="1">Involved in the synthesis of meso-diaminopimelate (m-DAP or DL-DAP), required for both lysine and peptidoglycan biosynthesis. Catalyzes the direct conversion of tetrahydrodipicolinate to LL-diaminopimelate.</text>
</comment>
<comment type="catalytic activity">
    <reaction evidence="1">
        <text>(2S,6S)-2,6-diaminopimelate + 2-oxoglutarate = (S)-2,3,4,5-tetrahydrodipicolinate + L-glutamate + H2O + H(+)</text>
        <dbReference type="Rhea" id="RHEA:23988"/>
        <dbReference type="ChEBI" id="CHEBI:15377"/>
        <dbReference type="ChEBI" id="CHEBI:15378"/>
        <dbReference type="ChEBI" id="CHEBI:16810"/>
        <dbReference type="ChEBI" id="CHEBI:16845"/>
        <dbReference type="ChEBI" id="CHEBI:29985"/>
        <dbReference type="ChEBI" id="CHEBI:57609"/>
        <dbReference type="EC" id="2.6.1.83"/>
    </reaction>
</comment>
<comment type="cofactor">
    <cofactor evidence="1">
        <name>pyridoxal 5'-phosphate</name>
        <dbReference type="ChEBI" id="CHEBI:597326"/>
    </cofactor>
</comment>
<comment type="pathway">
    <text evidence="1">Amino-acid biosynthesis; L-lysine biosynthesis via DAP pathway; LL-2,6-diaminopimelate from (S)-tetrahydrodipicolinate (aminotransferase route): step 1/1.</text>
</comment>
<comment type="subunit">
    <text evidence="1">Homodimer.</text>
</comment>
<comment type="similarity">
    <text evidence="1">Belongs to the class-I pyridoxal-phosphate-dependent aminotransferase family. LL-diaminopimelate aminotransferase subfamily.</text>
</comment>
<reference key="1">
    <citation type="journal article" date="2007" name="PLoS Genet.">
        <title>Patterns and implications of gene gain and loss in the evolution of Prochlorococcus.</title>
        <authorList>
            <person name="Kettler G.C."/>
            <person name="Martiny A.C."/>
            <person name="Huang K."/>
            <person name="Zucker J."/>
            <person name="Coleman M.L."/>
            <person name="Rodrigue S."/>
            <person name="Chen F."/>
            <person name="Lapidus A."/>
            <person name="Ferriera S."/>
            <person name="Johnson J."/>
            <person name="Steglich C."/>
            <person name="Church G.M."/>
            <person name="Richardson P."/>
            <person name="Chisholm S.W."/>
        </authorList>
    </citation>
    <scope>NUCLEOTIDE SEQUENCE [LARGE SCALE GENOMIC DNA]</scope>
    <source>
        <strain>NATL1A</strain>
    </source>
</reference>
<keyword id="KW-0032">Aminotransferase</keyword>
<keyword id="KW-0663">Pyridoxal phosphate</keyword>
<keyword id="KW-0808">Transferase</keyword>
<sequence length="408" mass="45273">MVKVNADYLKLKAGYLFPEISRRITEFSSKNPNANLIRLGIGDVTEPLPLACREAMKAAIEEMGTEDGFRGYGPEQGYKWLREIISENDYISRGCEISAEEIFVSDGSKCDSSNILDILGKENKIAVTDPVYPVYVDTNVMTGRTGEANSVGEYTGLSYIPINSENGFEASIPKDKFDLIYLCFPNNPTGAVATKEQLVSWVKYAKENNSLILFDAAYEAFIKDESIPHSIFEIEGARDCAIEFRSFSKNAGFTGTRCAFTVIPKSLKGKAGIETVDLWSLWNRRQSTKFNGVSYVVQRGAEAVYSKEGKIQIKKLVSFYMDNAEIIKSNLTAAGFEVFGAVNAPYAWIKTPKNMSSWDFFDFLLEKANVVGTPGSGFGAAGEGYFRLSAFNSRENVEKAMERIVKLK</sequence>
<proteinExistence type="inferred from homology"/>
<accession>A2C4T7</accession>
<gene>
    <name evidence="1" type="primary">dapL</name>
    <name type="ordered locus">NATL1_19411</name>
</gene>
<dbReference type="EC" id="2.6.1.83" evidence="1"/>
<dbReference type="EMBL" id="CP000553">
    <property type="protein sequence ID" value="ABM76497.1"/>
    <property type="molecule type" value="Genomic_DNA"/>
</dbReference>
<dbReference type="RefSeq" id="WP_011824469.1">
    <property type="nucleotide sequence ID" value="NC_008819.1"/>
</dbReference>
<dbReference type="SMR" id="A2C4T7"/>
<dbReference type="KEGG" id="pme:NATL1_19411"/>
<dbReference type="eggNOG" id="COG0436">
    <property type="taxonomic scope" value="Bacteria"/>
</dbReference>
<dbReference type="HOGENOM" id="CLU_051433_0_0_3"/>
<dbReference type="UniPathway" id="UPA00034">
    <property type="reaction ID" value="UER00466"/>
</dbReference>
<dbReference type="Proteomes" id="UP000002592">
    <property type="component" value="Chromosome"/>
</dbReference>
<dbReference type="GO" id="GO:0010285">
    <property type="term" value="F:L,L-diaminopimelate aminotransferase activity"/>
    <property type="evidence" value="ECO:0007669"/>
    <property type="project" value="UniProtKB-UniRule"/>
</dbReference>
<dbReference type="GO" id="GO:0030170">
    <property type="term" value="F:pyridoxal phosphate binding"/>
    <property type="evidence" value="ECO:0007669"/>
    <property type="project" value="UniProtKB-UniRule"/>
</dbReference>
<dbReference type="GO" id="GO:0033362">
    <property type="term" value="P:lysine biosynthetic process via diaminopimelate, diaminopimelate-aminotransferase pathway"/>
    <property type="evidence" value="ECO:0007669"/>
    <property type="project" value="UniProtKB-UniRule"/>
</dbReference>
<dbReference type="CDD" id="cd00609">
    <property type="entry name" value="AAT_like"/>
    <property type="match status" value="1"/>
</dbReference>
<dbReference type="FunFam" id="3.40.640.10:FF:000099">
    <property type="entry name" value="LL-diaminopimelate aminotransferase, chloroplastic"/>
    <property type="match status" value="1"/>
</dbReference>
<dbReference type="Gene3D" id="3.90.1150.10">
    <property type="entry name" value="Aspartate Aminotransferase, domain 1"/>
    <property type="match status" value="1"/>
</dbReference>
<dbReference type="Gene3D" id="3.40.640.10">
    <property type="entry name" value="Type I PLP-dependent aspartate aminotransferase-like (Major domain)"/>
    <property type="match status" value="1"/>
</dbReference>
<dbReference type="HAMAP" id="MF_01642">
    <property type="entry name" value="DapL_aminotrans_1"/>
    <property type="match status" value="1"/>
</dbReference>
<dbReference type="InterPro" id="IPR004839">
    <property type="entry name" value="Aminotransferase_I/II_large"/>
</dbReference>
<dbReference type="InterPro" id="IPR019942">
    <property type="entry name" value="DapL/ALD1"/>
</dbReference>
<dbReference type="InterPro" id="IPR015424">
    <property type="entry name" value="PyrdxlP-dep_Trfase"/>
</dbReference>
<dbReference type="InterPro" id="IPR015421">
    <property type="entry name" value="PyrdxlP-dep_Trfase_major"/>
</dbReference>
<dbReference type="InterPro" id="IPR015422">
    <property type="entry name" value="PyrdxlP-dep_Trfase_small"/>
</dbReference>
<dbReference type="NCBIfam" id="TIGR03542">
    <property type="entry name" value="DAPAT_plant"/>
    <property type="match status" value="1"/>
</dbReference>
<dbReference type="PANTHER" id="PTHR43144">
    <property type="entry name" value="AMINOTRANSFERASE"/>
    <property type="match status" value="1"/>
</dbReference>
<dbReference type="Pfam" id="PF00155">
    <property type="entry name" value="Aminotran_1_2"/>
    <property type="match status" value="1"/>
</dbReference>
<dbReference type="SUPFAM" id="SSF53383">
    <property type="entry name" value="PLP-dependent transferases"/>
    <property type="match status" value="1"/>
</dbReference>
<name>DAPAT_PROM1</name>
<feature type="chain" id="PRO_0000312540" description="LL-diaminopimelate aminotransferase">
    <location>
        <begin position="1"/>
        <end position="408"/>
    </location>
</feature>
<feature type="binding site" evidence="1">
    <location>
        <position position="15"/>
    </location>
    <ligand>
        <name>substrate</name>
    </ligand>
</feature>
<feature type="binding site" evidence="1">
    <location>
        <position position="42"/>
    </location>
    <ligand>
        <name>substrate</name>
    </ligand>
</feature>
<feature type="binding site" evidence="1">
    <location>
        <position position="72"/>
    </location>
    <ligand>
        <name>pyridoxal 5'-phosphate</name>
        <dbReference type="ChEBI" id="CHEBI:597326"/>
    </ligand>
</feature>
<feature type="binding site" evidence="1">
    <location>
        <begin position="108"/>
        <end position="109"/>
    </location>
    <ligand>
        <name>pyridoxal 5'-phosphate</name>
        <dbReference type="ChEBI" id="CHEBI:597326"/>
    </ligand>
</feature>
<feature type="binding site" evidence="1">
    <location>
        <position position="109"/>
    </location>
    <ligand>
        <name>substrate</name>
    </ligand>
</feature>
<feature type="binding site" evidence="1">
    <location>
        <position position="132"/>
    </location>
    <ligand>
        <name>pyridoxal 5'-phosphate</name>
        <dbReference type="ChEBI" id="CHEBI:597326"/>
    </ligand>
</feature>
<feature type="binding site" evidence="1">
    <location>
        <position position="132"/>
    </location>
    <ligand>
        <name>substrate</name>
    </ligand>
</feature>
<feature type="binding site" evidence="1">
    <location>
        <position position="187"/>
    </location>
    <ligand>
        <name>pyridoxal 5'-phosphate</name>
        <dbReference type="ChEBI" id="CHEBI:597326"/>
    </ligand>
</feature>
<feature type="binding site" evidence="1">
    <location>
        <position position="187"/>
    </location>
    <ligand>
        <name>substrate</name>
    </ligand>
</feature>
<feature type="binding site" evidence="1">
    <location>
        <position position="218"/>
    </location>
    <ligand>
        <name>pyridoxal 5'-phosphate</name>
        <dbReference type="ChEBI" id="CHEBI:597326"/>
    </ligand>
</feature>
<feature type="binding site" evidence="1">
    <location>
        <begin position="246"/>
        <end position="248"/>
    </location>
    <ligand>
        <name>pyridoxal 5'-phosphate</name>
        <dbReference type="ChEBI" id="CHEBI:597326"/>
    </ligand>
</feature>
<feature type="binding site" evidence="1">
    <location>
        <position position="257"/>
    </location>
    <ligand>
        <name>pyridoxal 5'-phosphate</name>
        <dbReference type="ChEBI" id="CHEBI:597326"/>
    </ligand>
</feature>
<feature type="binding site" evidence="1">
    <location>
        <position position="291"/>
    </location>
    <ligand>
        <name>pyridoxal 5'-phosphate</name>
        <dbReference type="ChEBI" id="CHEBI:597326"/>
    </ligand>
</feature>
<feature type="binding site" evidence="1">
    <location>
        <position position="291"/>
    </location>
    <ligand>
        <name>substrate</name>
    </ligand>
</feature>
<feature type="binding site" evidence="1">
    <location>
        <position position="387"/>
    </location>
    <ligand>
        <name>substrate</name>
    </ligand>
</feature>
<feature type="modified residue" description="N6-(pyridoxal phosphate)lysine" evidence="1">
    <location>
        <position position="249"/>
    </location>
</feature>
<organism>
    <name type="scientific">Prochlorococcus marinus (strain NATL1A)</name>
    <dbReference type="NCBI Taxonomy" id="167555"/>
    <lineage>
        <taxon>Bacteria</taxon>
        <taxon>Bacillati</taxon>
        <taxon>Cyanobacteriota</taxon>
        <taxon>Cyanophyceae</taxon>
        <taxon>Synechococcales</taxon>
        <taxon>Prochlorococcaceae</taxon>
        <taxon>Prochlorococcus</taxon>
    </lineage>
</organism>
<protein>
    <recommendedName>
        <fullName evidence="1">LL-diaminopimelate aminotransferase</fullName>
        <shortName evidence="1">DAP-AT</shortName>
        <shortName evidence="1">DAP-aminotransferase</shortName>
        <shortName evidence="1">LL-DAP-aminotransferase</shortName>
        <ecNumber evidence="1">2.6.1.83</ecNumber>
    </recommendedName>
</protein>
<evidence type="ECO:0000255" key="1">
    <source>
        <dbReference type="HAMAP-Rule" id="MF_01642"/>
    </source>
</evidence>